<evidence type="ECO:0000255" key="1">
    <source>
        <dbReference type="HAMAP-Rule" id="MF_00006"/>
    </source>
</evidence>
<keyword id="KW-0028">Amino-acid biosynthesis</keyword>
<keyword id="KW-0055">Arginine biosynthesis</keyword>
<keyword id="KW-0963">Cytoplasm</keyword>
<keyword id="KW-0456">Lyase</keyword>
<feature type="chain" id="PRO_0000321432" description="Argininosuccinate lyase">
    <location>
        <begin position="1"/>
        <end position="462"/>
    </location>
</feature>
<sequence length="462" mass="53294">MIQIKLWQGRFSKDTARIFDEFNASIMVDINLFEYDVMGSVAHVKMLSKCDIIPEDEGKLIVNTLYEILNDFKEGKIEFDMSDEDVHMLIEKELIKRIGQVGKKVHTARSRNDQVVLDERLFCREKNLYLQELIKNLIDTIIKLAEENIDTIMPGFTHLQKAQPVLFSHYILAYAQMLKRDLLRFRQNFISINLNPLGSAALAGTTFDIDRFFVADQLEFDGVTENSIDTVSDRDFILEMLFNIAMLQMHLSRLAEDFIIFNTDEFRFIELDDAFCSGSSIMPQKKNPDALELIRGKTGRTFGNLIGLLTVLKALPLSYNKDMQEDKEFLFDSIDTAEKSLIIVNEILKTLKVNKENMLLACKSGFINATDLADYLVTKGVAFRDAHFVVGNIVKYCIENNKSLEELSTEEFKRFCDKIEEDVFKFISLENCIKRRKSYGATSPELVKKQIENLKEFLRAYE</sequence>
<organism>
    <name type="scientific">Caldicellulosiruptor saccharolyticus (strain ATCC 43494 / DSM 8903 / Tp8T 6331)</name>
    <dbReference type="NCBI Taxonomy" id="351627"/>
    <lineage>
        <taxon>Bacteria</taxon>
        <taxon>Bacillati</taxon>
        <taxon>Bacillota</taxon>
        <taxon>Bacillota incertae sedis</taxon>
        <taxon>Caldicellulosiruptorales</taxon>
        <taxon>Caldicellulosiruptoraceae</taxon>
        <taxon>Caldicellulosiruptor</taxon>
    </lineage>
</organism>
<name>ARLY_CALS8</name>
<dbReference type="EC" id="4.3.2.1" evidence="1"/>
<dbReference type="EMBL" id="CP000679">
    <property type="protein sequence ID" value="ABP67398.1"/>
    <property type="molecule type" value="Genomic_DNA"/>
</dbReference>
<dbReference type="SMR" id="A4XKG3"/>
<dbReference type="STRING" id="351627.Csac_1813"/>
<dbReference type="KEGG" id="csc:Csac_1813"/>
<dbReference type="eggNOG" id="COG0165">
    <property type="taxonomic scope" value="Bacteria"/>
</dbReference>
<dbReference type="HOGENOM" id="CLU_027272_2_3_9"/>
<dbReference type="OrthoDB" id="9769623at2"/>
<dbReference type="UniPathway" id="UPA00068">
    <property type="reaction ID" value="UER00114"/>
</dbReference>
<dbReference type="Proteomes" id="UP000000256">
    <property type="component" value="Chromosome"/>
</dbReference>
<dbReference type="GO" id="GO:0005829">
    <property type="term" value="C:cytosol"/>
    <property type="evidence" value="ECO:0007669"/>
    <property type="project" value="TreeGrafter"/>
</dbReference>
<dbReference type="GO" id="GO:0004056">
    <property type="term" value="F:argininosuccinate lyase activity"/>
    <property type="evidence" value="ECO:0007669"/>
    <property type="project" value="UniProtKB-UniRule"/>
</dbReference>
<dbReference type="GO" id="GO:0042450">
    <property type="term" value="P:arginine biosynthetic process via ornithine"/>
    <property type="evidence" value="ECO:0007669"/>
    <property type="project" value="InterPro"/>
</dbReference>
<dbReference type="GO" id="GO:0006526">
    <property type="term" value="P:L-arginine biosynthetic process"/>
    <property type="evidence" value="ECO:0007669"/>
    <property type="project" value="UniProtKB-UniRule"/>
</dbReference>
<dbReference type="CDD" id="cd01359">
    <property type="entry name" value="Argininosuccinate_lyase"/>
    <property type="match status" value="1"/>
</dbReference>
<dbReference type="FunFam" id="1.10.40.30:FF:000001">
    <property type="entry name" value="Argininosuccinate lyase"/>
    <property type="match status" value="1"/>
</dbReference>
<dbReference type="FunFam" id="1.20.200.10:FF:000015">
    <property type="entry name" value="argininosuccinate lyase isoform X2"/>
    <property type="match status" value="1"/>
</dbReference>
<dbReference type="Gene3D" id="1.10.40.30">
    <property type="entry name" value="Fumarase/aspartase (C-terminal domain)"/>
    <property type="match status" value="1"/>
</dbReference>
<dbReference type="Gene3D" id="1.20.200.10">
    <property type="entry name" value="Fumarase/aspartase (Central domain)"/>
    <property type="match status" value="1"/>
</dbReference>
<dbReference type="Gene3D" id="1.10.275.10">
    <property type="entry name" value="Fumarase/aspartase (N-terminal domain)"/>
    <property type="match status" value="1"/>
</dbReference>
<dbReference type="HAMAP" id="MF_00006">
    <property type="entry name" value="Arg_succ_lyase"/>
    <property type="match status" value="1"/>
</dbReference>
<dbReference type="InterPro" id="IPR029419">
    <property type="entry name" value="Arg_succ_lyase_C"/>
</dbReference>
<dbReference type="InterPro" id="IPR009049">
    <property type="entry name" value="Argininosuccinate_lyase"/>
</dbReference>
<dbReference type="InterPro" id="IPR024083">
    <property type="entry name" value="Fumarase/histidase_N"/>
</dbReference>
<dbReference type="InterPro" id="IPR020557">
    <property type="entry name" value="Fumarate_lyase_CS"/>
</dbReference>
<dbReference type="InterPro" id="IPR000362">
    <property type="entry name" value="Fumarate_lyase_fam"/>
</dbReference>
<dbReference type="InterPro" id="IPR022761">
    <property type="entry name" value="Fumarate_lyase_N"/>
</dbReference>
<dbReference type="InterPro" id="IPR008948">
    <property type="entry name" value="L-Aspartase-like"/>
</dbReference>
<dbReference type="NCBIfam" id="TIGR00838">
    <property type="entry name" value="argH"/>
    <property type="match status" value="1"/>
</dbReference>
<dbReference type="PANTHER" id="PTHR43814">
    <property type="entry name" value="ARGININOSUCCINATE LYASE"/>
    <property type="match status" value="1"/>
</dbReference>
<dbReference type="PANTHER" id="PTHR43814:SF1">
    <property type="entry name" value="ARGININOSUCCINATE LYASE"/>
    <property type="match status" value="1"/>
</dbReference>
<dbReference type="Pfam" id="PF14698">
    <property type="entry name" value="ASL_C2"/>
    <property type="match status" value="1"/>
</dbReference>
<dbReference type="Pfam" id="PF00206">
    <property type="entry name" value="Lyase_1"/>
    <property type="match status" value="1"/>
</dbReference>
<dbReference type="PRINTS" id="PR00145">
    <property type="entry name" value="ARGSUCLYASE"/>
</dbReference>
<dbReference type="PRINTS" id="PR00149">
    <property type="entry name" value="FUMRATELYASE"/>
</dbReference>
<dbReference type="SUPFAM" id="SSF48557">
    <property type="entry name" value="L-aspartase-like"/>
    <property type="match status" value="1"/>
</dbReference>
<dbReference type="PROSITE" id="PS00163">
    <property type="entry name" value="FUMARATE_LYASES"/>
    <property type="match status" value="1"/>
</dbReference>
<comment type="catalytic activity">
    <reaction evidence="1">
        <text>2-(N(omega)-L-arginino)succinate = fumarate + L-arginine</text>
        <dbReference type="Rhea" id="RHEA:24020"/>
        <dbReference type="ChEBI" id="CHEBI:29806"/>
        <dbReference type="ChEBI" id="CHEBI:32682"/>
        <dbReference type="ChEBI" id="CHEBI:57472"/>
        <dbReference type="EC" id="4.3.2.1"/>
    </reaction>
</comment>
<comment type="pathway">
    <text evidence="1">Amino-acid biosynthesis; L-arginine biosynthesis; L-arginine from L-ornithine and carbamoyl phosphate: step 3/3.</text>
</comment>
<comment type="subcellular location">
    <subcellularLocation>
        <location evidence="1">Cytoplasm</location>
    </subcellularLocation>
</comment>
<comment type="similarity">
    <text evidence="1">Belongs to the lyase 1 family. Argininosuccinate lyase subfamily.</text>
</comment>
<protein>
    <recommendedName>
        <fullName evidence="1">Argininosuccinate lyase</fullName>
        <shortName evidence="1">ASAL</shortName>
        <ecNumber evidence="1">4.3.2.1</ecNumber>
    </recommendedName>
    <alternativeName>
        <fullName evidence="1">Arginosuccinase</fullName>
    </alternativeName>
</protein>
<gene>
    <name evidence="1" type="primary">argH</name>
    <name type="ordered locus">Csac_1813</name>
</gene>
<accession>A4XKG3</accession>
<reference key="1">
    <citation type="submission" date="2007-04" db="EMBL/GenBank/DDBJ databases">
        <title>Genome sequence of the thermophilic hydrogen-producing bacterium Caldicellulosiruptor saccharolyticus DSM 8903.</title>
        <authorList>
            <person name="Copeland A."/>
            <person name="Lucas S."/>
            <person name="Lapidus A."/>
            <person name="Barry K."/>
            <person name="Detter J.C."/>
            <person name="Glavina del Rio T."/>
            <person name="Hammon N."/>
            <person name="Israni S."/>
            <person name="Dalin E."/>
            <person name="Tice H."/>
            <person name="Pitluck S."/>
            <person name="Kiss H."/>
            <person name="Brettin T."/>
            <person name="Bruce D."/>
            <person name="Han C."/>
            <person name="Schmutz J."/>
            <person name="Larimer F."/>
            <person name="Land M."/>
            <person name="Hauser L."/>
            <person name="Kyrpides N."/>
            <person name="Lykidis A."/>
            <person name="van de Werken H.J.G."/>
            <person name="Verhaart M.R.A."/>
            <person name="VanFossen A.L."/>
            <person name="Lewis D.L."/>
            <person name="Nichols J.D."/>
            <person name="Goorissen H.P."/>
            <person name="van Niel E.W.J."/>
            <person name="Stams F.J.M."/>
            <person name="Willquist K.U."/>
            <person name="Ward D.E."/>
            <person name="van der Oost J."/>
            <person name="Kelly R.M."/>
            <person name="Kengen S.M.W."/>
            <person name="Richardson P."/>
        </authorList>
    </citation>
    <scope>NUCLEOTIDE SEQUENCE [LARGE SCALE GENOMIC DNA]</scope>
    <source>
        <strain>ATCC 43494 / DSM 8903 / Tp8T 6331</strain>
    </source>
</reference>
<proteinExistence type="inferred from homology"/>